<dbReference type="EMBL" id="AC009324">
    <property type="protein sequence ID" value="AAF02866.1"/>
    <property type="status" value="ALT_INIT"/>
    <property type="molecule type" value="Genomic_DNA"/>
</dbReference>
<dbReference type="EMBL" id="CP002684">
    <property type="protein sequence ID" value="AEE33012.1"/>
    <property type="molecule type" value="Genomic_DNA"/>
</dbReference>
<dbReference type="EMBL" id="CP002684">
    <property type="protein sequence ID" value="AEE33013.1"/>
    <property type="molecule type" value="Genomic_DNA"/>
</dbReference>
<dbReference type="EMBL" id="CP002684">
    <property type="protein sequence ID" value="ANM58534.1"/>
    <property type="molecule type" value="Genomic_DNA"/>
</dbReference>
<dbReference type="EMBL" id="CP002684">
    <property type="protein sequence ID" value="ANM58535.1"/>
    <property type="molecule type" value="Genomic_DNA"/>
</dbReference>
<dbReference type="EMBL" id="AY084488">
    <property type="protein sequence ID" value="AAM61058.1"/>
    <property type="status" value="ALT_INIT"/>
    <property type="molecule type" value="mRNA"/>
</dbReference>
<dbReference type="EMBL" id="BT024598">
    <property type="protein sequence ID" value="ABD42996.1"/>
    <property type="molecule type" value="mRNA"/>
</dbReference>
<dbReference type="PIR" id="H96578">
    <property type="entry name" value="H96578"/>
</dbReference>
<dbReference type="RefSeq" id="NP_001031184.1">
    <molecule id="Q8LG32-2"/>
    <property type="nucleotide sequence ID" value="NM_001036107.3"/>
</dbReference>
<dbReference type="RefSeq" id="NP_001319216.1">
    <molecule id="Q8LG32-1"/>
    <property type="nucleotide sequence ID" value="NM_001333613.1"/>
</dbReference>
<dbReference type="RefSeq" id="NP_001319217.1">
    <molecule id="Q8LG32-1"/>
    <property type="nucleotide sequence ID" value="NM_001333617.1"/>
</dbReference>
<dbReference type="RefSeq" id="NP_001320314.1">
    <molecule id="Q8LG32-2"/>
    <property type="nucleotide sequence ID" value="NM_001333618.1"/>
</dbReference>
<dbReference type="RefSeq" id="NP_001320961.1">
    <molecule id="Q8LG32-2"/>
    <property type="nucleotide sequence ID" value="NM_001333614.1"/>
</dbReference>
<dbReference type="RefSeq" id="NP_564642.1">
    <molecule id="Q8LG32-1"/>
    <property type="nucleotide sequence ID" value="NM_104264.2"/>
</dbReference>
<dbReference type="RefSeq" id="NP_564645.1">
    <molecule id="Q8LG32-1"/>
    <property type="nucleotide sequence ID" value="NM_104267.2"/>
</dbReference>
<dbReference type="RefSeq" id="NP_974021.1">
    <molecule id="Q8LG32-2"/>
    <property type="nucleotide sequence ID" value="NM_202292.3"/>
</dbReference>
<dbReference type="SMR" id="Q8LG32"/>
<dbReference type="STRING" id="3702.Q8LG32"/>
<dbReference type="PaxDb" id="3702-AT1G53870.1"/>
<dbReference type="EnsemblPlants" id="AT1G53870.1">
    <property type="protein sequence ID" value="AT1G53870.1"/>
    <property type="gene ID" value="AT1G53870"/>
</dbReference>
<dbReference type="EnsemblPlants" id="AT1G53870.2">
    <molecule id="Q8LG32-2"/>
    <property type="protein sequence ID" value="AT1G53870.2"/>
    <property type="gene ID" value="AT1G53870"/>
</dbReference>
<dbReference type="EnsemblPlants" id="AT1G53870.3">
    <property type="protein sequence ID" value="AT1G53870.3"/>
    <property type="gene ID" value="AT1G53870"/>
</dbReference>
<dbReference type="EnsemblPlants" id="AT1G53870.4">
    <molecule id="Q8LG32-2"/>
    <property type="protein sequence ID" value="AT1G53870.4"/>
    <property type="gene ID" value="AT1G53870"/>
</dbReference>
<dbReference type="EnsemblPlants" id="AT1G53890.1">
    <property type="protein sequence ID" value="AT1G53890.1"/>
    <property type="gene ID" value="AT1G53890"/>
</dbReference>
<dbReference type="EnsemblPlants" id="AT1G53890.2">
    <molecule id="Q8LG32-2"/>
    <property type="protein sequence ID" value="AT1G53890.2"/>
    <property type="gene ID" value="AT1G53890"/>
</dbReference>
<dbReference type="EnsemblPlants" id="AT1G53890.4">
    <property type="protein sequence ID" value="AT1G53890.4"/>
    <property type="gene ID" value="AT1G53890"/>
</dbReference>
<dbReference type="EnsemblPlants" id="AT1G53890.5">
    <molecule id="Q8LG32-2"/>
    <property type="protein sequence ID" value="AT1G53890.5"/>
    <property type="gene ID" value="AT1G53890"/>
</dbReference>
<dbReference type="GeneID" id="841824"/>
<dbReference type="Gramene" id="AT1G53870.1">
    <property type="protein sequence ID" value="AT1G53870.1"/>
    <property type="gene ID" value="AT1G53870"/>
</dbReference>
<dbReference type="Gramene" id="AT1G53870.2">
    <molecule id="Q8LG32-2"/>
    <property type="protein sequence ID" value="AT1G53870.2"/>
    <property type="gene ID" value="AT1G53870"/>
</dbReference>
<dbReference type="Gramene" id="AT1G53870.3">
    <property type="protein sequence ID" value="AT1G53870.3"/>
    <property type="gene ID" value="AT1G53870"/>
</dbReference>
<dbReference type="Gramene" id="AT1G53870.4">
    <molecule id="Q8LG32-2"/>
    <property type="protein sequence ID" value="AT1G53870.4"/>
    <property type="gene ID" value="AT1G53870"/>
</dbReference>
<dbReference type="Gramene" id="AT1G53890.1">
    <property type="protein sequence ID" value="AT1G53890.1"/>
    <property type="gene ID" value="AT1G53890"/>
</dbReference>
<dbReference type="Gramene" id="AT1G53890.2">
    <molecule id="Q8LG32-2"/>
    <property type="protein sequence ID" value="AT1G53890.2"/>
    <property type="gene ID" value="AT1G53890"/>
</dbReference>
<dbReference type="Gramene" id="AT1G53890.4">
    <property type="protein sequence ID" value="AT1G53890.4"/>
    <property type="gene ID" value="AT1G53890"/>
</dbReference>
<dbReference type="Gramene" id="AT1G53890.5">
    <molecule id="Q8LG32-2"/>
    <property type="protein sequence ID" value="AT1G53890.5"/>
    <property type="gene ID" value="AT1G53890"/>
</dbReference>
<dbReference type="KEGG" id="ath:AT1G53870"/>
<dbReference type="KEGG" id="ath:AT1G53890"/>
<dbReference type="Araport" id="AT1G53870"/>
<dbReference type="TAIR" id="AT1G53870"/>
<dbReference type="HOGENOM" id="CLU_063146_2_1_1"/>
<dbReference type="InParanoid" id="Q8LG32"/>
<dbReference type="OMA" id="CARKPAY"/>
<dbReference type="PhylomeDB" id="Q8LG32"/>
<dbReference type="PRO" id="PR:Q8LG32"/>
<dbReference type="Proteomes" id="UP000006548">
    <property type="component" value="Chromosome 1"/>
</dbReference>
<dbReference type="Gene3D" id="2.40.160.200">
    <property type="entry name" value="LURP1-related"/>
    <property type="match status" value="1"/>
</dbReference>
<dbReference type="InterPro" id="IPR007612">
    <property type="entry name" value="LOR"/>
</dbReference>
<dbReference type="InterPro" id="IPR038595">
    <property type="entry name" value="LOR_sf"/>
</dbReference>
<dbReference type="InterPro" id="IPR025659">
    <property type="entry name" value="Tubby-like_C"/>
</dbReference>
<dbReference type="PANTHER" id="PTHR31087">
    <property type="match status" value="1"/>
</dbReference>
<dbReference type="PANTHER" id="PTHR31087:SF81">
    <property type="entry name" value="LURP-ONE-LIKE PROTEIN-RELATED"/>
    <property type="match status" value="1"/>
</dbReference>
<dbReference type="Pfam" id="PF04525">
    <property type="entry name" value="LOR"/>
    <property type="match status" value="1"/>
</dbReference>
<dbReference type="SUPFAM" id="SSF54518">
    <property type="entry name" value="Tubby C-terminal domain-like"/>
    <property type="match status" value="1"/>
</dbReference>
<feature type="chain" id="PRO_0000399234" description="Protein LURP-one-related 2">
    <location>
        <begin position="1"/>
        <end position="217"/>
    </location>
</feature>
<feature type="splice variant" id="VSP_039832" description="In isoform 2." evidence="2">
    <original>EPQLDHSL</original>
    <variation>VILKVSMF</variation>
    <location>
        <begin position="195"/>
        <end position="202"/>
    </location>
</feature>
<feature type="splice variant" id="VSP_039833" description="In isoform 2." evidence="2">
    <location>
        <begin position="203"/>
        <end position="217"/>
    </location>
</feature>
<feature type="sequence conflict" description="In Ref. 3; AAM61058." evidence="2" ref="3">
    <original>R</original>
    <variation>H</variation>
    <location>
        <position position="156"/>
    </location>
</feature>
<evidence type="ECO:0000250" key="1"/>
<evidence type="ECO:0000305" key="2"/>
<accession>Q8LG32</accession>
<accession>Q682U5</accession>
<accession>Q9S7P7</accession>
<organism>
    <name type="scientific">Arabidopsis thaliana</name>
    <name type="common">Mouse-ear cress</name>
    <dbReference type="NCBI Taxonomy" id="3702"/>
    <lineage>
        <taxon>Eukaryota</taxon>
        <taxon>Viridiplantae</taxon>
        <taxon>Streptophyta</taxon>
        <taxon>Embryophyta</taxon>
        <taxon>Tracheophyta</taxon>
        <taxon>Spermatophyta</taxon>
        <taxon>Magnoliopsida</taxon>
        <taxon>eudicotyledons</taxon>
        <taxon>Gunneridae</taxon>
        <taxon>Pentapetalae</taxon>
        <taxon>rosids</taxon>
        <taxon>malvids</taxon>
        <taxon>Brassicales</taxon>
        <taxon>Brassicaceae</taxon>
        <taxon>Camelineae</taxon>
        <taxon>Arabidopsis</taxon>
    </lineage>
</organism>
<keyword id="KW-0025">Alternative splicing</keyword>
<keyword id="KW-1185">Reference proteome</keyword>
<name>LOR2_ARATH</name>
<comment type="function">
    <text evidence="1">Might be related to the phospholipid scramblase and tubby-like superfamily of membrane tethered transcription factors.</text>
</comment>
<comment type="alternative products">
    <event type="alternative splicing"/>
    <isoform>
        <id>Q8LG32-1</id>
        <name>1</name>
        <sequence type="displayed"/>
    </isoform>
    <isoform>
        <id>Q8LG32-2</id>
        <name>2</name>
        <sequence type="described" ref="VSP_039832 VSP_039833"/>
    </isoform>
</comment>
<comment type="similarity">
    <text evidence="2">Belongs to the LOR family.</text>
</comment>
<comment type="sequence caution" evidence="2">
    <conflict type="erroneous initiation">
        <sequence resource="EMBL-CDS" id="AAF02866"/>
    </conflict>
    <text>Truncated N-terminus.</text>
</comment>
<comment type="sequence caution" evidence="2">
    <conflict type="erroneous initiation">
        <sequence resource="EMBL-CDS" id="AAM61058"/>
    </conflict>
    <text>Truncated N-terminus.</text>
</comment>
<reference key="1">
    <citation type="journal article" date="2000" name="Nature">
        <title>Sequence and analysis of chromosome 1 of the plant Arabidopsis thaliana.</title>
        <authorList>
            <person name="Theologis A."/>
            <person name="Ecker J.R."/>
            <person name="Palm C.J."/>
            <person name="Federspiel N.A."/>
            <person name="Kaul S."/>
            <person name="White O."/>
            <person name="Alonso J."/>
            <person name="Altafi H."/>
            <person name="Araujo R."/>
            <person name="Bowman C.L."/>
            <person name="Brooks S.Y."/>
            <person name="Buehler E."/>
            <person name="Chan A."/>
            <person name="Chao Q."/>
            <person name="Chen H."/>
            <person name="Cheuk R.F."/>
            <person name="Chin C.W."/>
            <person name="Chung M.K."/>
            <person name="Conn L."/>
            <person name="Conway A.B."/>
            <person name="Conway A.R."/>
            <person name="Creasy T.H."/>
            <person name="Dewar K."/>
            <person name="Dunn P."/>
            <person name="Etgu P."/>
            <person name="Feldblyum T.V."/>
            <person name="Feng J.-D."/>
            <person name="Fong B."/>
            <person name="Fujii C.Y."/>
            <person name="Gill J.E."/>
            <person name="Goldsmith A.D."/>
            <person name="Haas B."/>
            <person name="Hansen N.F."/>
            <person name="Hughes B."/>
            <person name="Huizar L."/>
            <person name="Hunter J.L."/>
            <person name="Jenkins J."/>
            <person name="Johnson-Hopson C."/>
            <person name="Khan S."/>
            <person name="Khaykin E."/>
            <person name="Kim C.J."/>
            <person name="Koo H.L."/>
            <person name="Kremenetskaia I."/>
            <person name="Kurtz D.B."/>
            <person name="Kwan A."/>
            <person name="Lam B."/>
            <person name="Langin-Hooper S."/>
            <person name="Lee A."/>
            <person name="Lee J.M."/>
            <person name="Lenz C.A."/>
            <person name="Li J.H."/>
            <person name="Li Y.-P."/>
            <person name="Lin X."/>
            <person name="Liu S.X."/>
            <person name="Liu Z.A."/>
            <person name="Luros J.S."/>
            <person name="Maiti R."/>
            <person name="Marziali A."/>
            <person name="Militscher J."/>
            <person name="Miranda M."/>
            <person name="Nguyen M."/>
            <person name="Nierman W.C."/>
            <person name="Osborne B.I."/>
            <person name="Pai G."/>
            <person name="Peterson J."/>
            <person name="Pham P.K."/>
            <person name="Rizzo M."/>
            <person name="Rooney T."/>
            <person name="Rowley D."/>
            <person name="Sakano H."/>
            <person name="Salzberg S.L."/>
            <person name="Schwartz J.R."/>
            <person name="Shinn P."/>
            <person name="Southwick A.M."/>
            <person name="Sun H."/>
            <person name="Tallon L.J."/>
            <person name="Tambunga G."/>
            <person name="Toriumi M.J."/>
            <person name="Town C.D."/>
            <person name="Utterback T."/>
            <person name="Van Aken S."/>
            <person name="Vaysberg M."/>
            <person name="Vysotskaia V.S."/>
            <person name="Walker M."/>
            <person name="Wu D."/>
            <person name="Yu G."/>
            <person name="Fraser C.M."/>
            <person name="Venter J.C."/>
            <person name="Davis R.W."/>
        </authorList>
    </citation>
    <scope>NUCLEOTIDE SEQUENCE [LARGE SCALE GENOMIC DNA]</scope>
    <source>
        <strain>cv. Columbia</strain>
    </source>
</reference>
<reference key="2">
    <citation type="journal article" date="2017" name="Plant J.">
        <title>Araport11: a complete reannotation of the Arabidopsis thaliana reference genome.</title>
        <authorList>
            <person name="Cheng C.Y."/>
            <person name="Krishnakumar V."/>
            <person name="Chan A.P."/>
            <person name="Thibaud-Nissen F."/>
            <person name="Schobel S."/>
            <person name="Town C.D."/>
        </authorList>
    </citation>
    <scope>GENOME REANNOTATION</scope>
    <source>
        <strain>cv. Columbia</strain>
    </source>
</reference>
<reference key="3">
    <citation type="submission" date="2002-03" db="EMBL/GenBank/DDBJ databases">
        <title>Full-length cDNA from Arabidopsis thaliana.</title>
        <authorList>
            <person name="Brover V.V."/>
            <person name="Troukhan M.E."/>
            <person name="Alexandrov N.A."/>
            <person name="Lu Y.-P."/>
            <person name="Flavell R.B."/>
            <person name="Feldmann K.A."/>
        </authorList>
    </citation>
    <scope>NUCLEOTIDE SEQUENCE [LARGE SCALE MRNA] (ISOFORM 1)</scope>
</reference>
<reference key="4">
    <citation type="submission" date="2006-02" db="EMBL/GenBank/DDBJ databases">
        <title>Arabidopsis ORF clones.</title>
        <authorList>
            <person name="Shinn P."/>
            <person name="Chen H."/>
            <person name="Kim C.J."/>
            <person name="Ecker J.R."/>
        </authorList>
    </citation>
    <scope>NUCLEOTIDE SEQUENCE [LARGE SCALE MRNA] (ISOFORM 1)</scope>
    <source>
        <strain>cv. Columbia</strain>
    </source>
</reference>
<protein>
    <recommendedName>
        <fullName>Protein LURP-one-related 2</fullName>
    </recommendedName>
</protein>
<gene>
    <name type="ordered locus">At1g53870</name>
    <name type="ORF">T18A20.10</name>
</gene>
<proteinExistence type="evidence at transcript level"/>
<sequence>MQIYNPISPVKTMVKIYPHLAFPVDMDVVQDKILPYLTTEQERFTIWMKSLVFNSKGCTVFDSKGNLIYRVDNYDSKSWSNEVYFMDLNGKILFTLRQKKLGFFKSWEGYNSTGTRFRLRKIFKILPRESSSSYKVVMGSRIVDGDQQSCYKIVNRGSVFAIKDGSGRLMAEVKNKLSDISGLDLGDDVLTMMVEPQLDHSLIMGIVIAYKLTKCKL</sequence>